<protein>
    <recommendedName>
        <fullName>Histone H2A.Z-specific chaperone CHZ1</fullName>
    </recommendedName>
</protein>
<gene>
    <name type="primary">CHZ1</name>
    <name type="ORF">CIMG_02495</name>
</gene>
<reference key="1">
    <citation type="journal article" date="2009" name="Genome Res.">
        <title>Comparative genomic analyses of the human fungal pathogens Coccidioides and their relatives.</title>
        <authorList>
            <person name="Sharpton T.J."/>
            <person name="Stajich J.E."/>
            <person name="Rounsley S.D."/>
            <person name="Gardner M.J."/>
            <person name="Wortman J.R."/>
            <person name="Jordar V.S."/>
            <person name="Maiti R."/>
            <person name="Kodira C.D."/>
            <person name="Neafsey D.E."/>
            <person name="Zeng Q."/>
            <person name="Hung C.-Y."/>
            <person name="McMahan C."/>
            <person name="Muszewska A."/>
            <person name="Grynberg M."/>
            <person name="Mandel M.A."/>
            <person name="Kellner E.M."/>
            <person name="Barker B.M."/>
            <person name="Galgiani J.N."/>
            <person name="Orbach M.J."/>
            <person name="Kirkland T.N."/>
            <person name="Cole G.T."/>
            <person name="Henn M.R."/>
            <person name="Birren B.W."/>
            <person name="Taylor J.W."/>
        </authorList>
    </citation>
    <scope>NUCLEOTIDE SEQUENCE [LARGE SCALE GENOMIC DNA]</scope>
    <source>
        <strain>RS</strain>
    </source>
</reference>
<reference key="2">
    <citation type="journal article" date="2010" name="Genome Res.">
        <title>Population genomic sequencing of Coccidioides fungi reveals recent hybridization and transposon control.</title>
        <authorList>
            <person name="Neafsey D.E."/>
            <person name="Barker B.M."/>
            <person name="Sharpton T.J."/>
            <person name="Stajich J.E."/>
            <person name="Park D.J."/>
            <person name="Whiston E."/>
            <person name="Hung C.-Y."/>
            <person name="McMahan C."/>
            <person name="White J."/>
            <person name="Sykes S."/>
            <person name="Heiman D."/>
            <person name="Young S."/>
            <person name="Zeng Q."/>
            <person name="Abouelleil A."/>
            <person name="Aftuck L."/>
            <person name="Bessette D."/>
            <person name="Brown A."/>
            <person name="FitzGerald M."/>
            <person name="Lui A."/>
            <person name="Macdonald J.P."/>
            <person name="Priest M."/>
            <person name="Orbach M.J."/>
            <person name="Galgiani J.N."/>
            <person name="Kirkland T.N."/>
            <person name="Cole G.T."/>
            <person name="Birren B.W."/>
            <person name="Henn M.R."/>
            <person name="Taylor J.W."/>
            <person name="Rounsley S.D."/>
        </authorList>
    </citation>
    <scope>GENOME REANNOTATION</scope>
    <source>
        <strain>RS</strain>
    </source>
</reference>
<sequence>MSANQDITLTEGEGSRPAGDKGKGKAVGSEDIPMEQYSGDSETEESDAADDETFPEDDIEEEEEAGDDNLERISEENIIPGGRRTRGKVINFAEAAEKVEADDAMDDDDDEEYKQRDEDDEMQG</sequence>
<feature type="chain" id="PRO_0000330208" description="Histone H2A.Z-specific chaperone CHZ1">
    <location>
        <begin position="1"/>
        <end position="124"/>
    </location>
</feature>
<feature type="region of interest" description="Disordered" evidence="2">
    <location>
        <begin position="1"/>
        <end position="124"/>
    </location>
</feature>
<feature type="compositionally biased region" description="Acidic residues" evidence="2">
    <location>
        <begin position="41"/>
        <end position="68"/>
    </location>
</feature>
<feature type="compositionally biased region" description="Acidic residues" evidence="2">
    <location>
        <begin position="102"/>
        <end position="124"/>
    </location>
</feature>
<dbReference type="EMBL" id="GG704911">
    <property type="protein sequence ID" value="EAS37141.3"/>
    <property type="molecule type" value="Genomic_DNA"/>
</dbReference>
<dbReference type="RefSeq" id="XP_001248724.2">
    <property type="nucleotide sequence ID" value="XM_001248723.2"/>
</dbReference>
<dbReference type="SMR" id="Q1E4L8"/>
<dbReference type="STRING" id="246410.Q1E4L8"/>
<dbReference type="GeneID" id="4567581"/>
<dbReference type="KEGG" id="cim:CIMG_02495"/>
<dbReference type="VEuPathDB" id="FungiDB:CIMG_02495"/>
<dbReference type="InParanoid" id="Q1E4L8"/>
<dbReference type="OMA" id="MEGVQDP"/>
<dbReference type="OrthoDB" id="4174291at2759"/>
<dbReference type="Proteomes" id="UP000001261">
    <property type="component" value="Unassembled WGS sequence"/>
</dbReference>
<dbReference type="GO" id="GO:0005634">
    <property type="term" value="C:nucleus"/>
    <property type="evidence" value="ECO:0007669"/>
    <property type="project" value="UniProtKB-SubCell"/>
</dbReference>
<dbReference type="InterPro" id="IPR019098">
    <property type="entry name" value="Histone_chaperone_domain_CHZ"/>
</dbReference>
<dbReference type="Pfam" id="PF09649">
    <property type="entry name" value="CHZ"/>
    <property type="match status" value="1"/>
</dbReference>
<dbReference type="SMART" id="SM01082">
    <property type="entry name" value="CHZ"/>
    <property type="match status" value="1"/>
</dbReference>
<name>CHZ1_COCIM</name>
<organism>
    <name type="scientific">Coccidioides immitis (strain RS)</name>
    <name type="common">Valley fever fungus</name>
    <dbReference type="NCBI Taxonomy" id="246410"/>
    <lineage>
        <taxon>Eukaryota</taxon>
        <taxon>Fungi</taxon>
        <taxon>Dikarya</taxon>
        <taxon>Ascomycota</taxon>
        <taxon>Pezizomycotina</taxon>
        <taxon>Eurotiomycetes</taxon>
        <taxon>Eurotiomycetidae</taxon>
        <taxon>Onygenales</taxon>
        <taxon>Onygenaceae</taxon>
        <taxon>Coccidioides</taxon>
    </lineage>
</organism>
<keyword id="KW-0143">Chaperone</keyword>
<keyword id="KW-0539">Nucleus</keyword>
<keyword id="KW-1185">Reference proteome</keyword>
<comment type="function">
    <text evidence="1">Forms a chaperone-bound H2A.Z-H2B complex that acts as a source for SWR1 complex-dependent H2A to H2A.Z histone replacement in chromatin.</text>
</comment>
<comment type="subunit">
    <text evidence="1">Forms a heterotrimer with H2A.Z-H2B, stabilizing the association of the histone dimer. Also, with a lower affinity, forms a heterotrimer with H2A-H2B (By similarity).</text>
</comment>
<comment type="subcellular location">
    <subcellularLocation>
        <location evidence="1">Nucleus</location>
    </subcellularLocation>
</comment>
<comment type="similarity">
    <text evidence="3">Belongs to the CHZ1 family.</text>
</comment>
<proteinExistence type="inferred from homology"/>
<evidence type="ECO:0000250" key="1"/>
<evidence type="ECO:0000256" key="2">
    <source>
        <dbReference type="SAM" id="MobiDB-lite"/>
    </source>
</evidence>
<evidence type="ECO:0000305" key="3"/>
<accession>Q1E4L8</accession>
<accession>J3KLW6</accession>